<reference key="1">
    <citation type="journal article" date="2007" name="Genome Biol.">
        <title>Characterization and modeling of the Haemophilus influenzae core and supragenomes based on the complete genomic sequences of Rd and 12 clinical nontypeable strains.</title>
        <authorList>
            <person name="Hogg J.S."/>
            <person name="Hu F.Z."/>
            <person name="Janto B."/>
            <person name="Boissy R."/>
            <person name="Hayes J."/>
            <person name="Keefe R."/>
            <person name="Post J.C."/>
            <person name="Ehrlich G.D."/>
        </authorList>
    </citation>
    <scope>NUCLEOTIDE SEQUENCE [LARGE SCALE GENOMIC DNA]</scope>
    <source>
        <strain>PittEE</strain>
    </source>
</reference>
<keyword id="KW-0963">Cytoplasm</keyword>
<keyword id="KW-0456">Lyase</keyword>
<keyword id="KW-0704">Schiff base</keyword>
<protein>
    <recommendedName>
        <fullName evidence="1">Deoxyribose-phosphate aldolase</fullName>
        <shortName evidence="1">DERA</shortName>
        <ecNumber evidence="1">4.1.2.4</ecNumber>
    </recommendedName>
    <alternativeName>
        <fullName evidence="1">2-deoxy-D-ribose 5-phosphate aldolase</fullName>
    </alternativeName>
    <alternativeName>
        <fullName evidence="1">Phosphodeoxyriboaldolase</fullName>
        <shortName evidence="1">Deoxyriboaldolase</shortName>
    </alternativeName>
</protein>
<dbReference type="EC" id="4.1.2.4" evidence="1"/>
<dbReference type="EMBL" id="CP000671">
    <property type="protein sequence ID" value="ABQ98639.1"/>
    <property type="molecule type" value="Genomic_DNA"/>
</dbReference>
<dbReference type="SMR" id="A5UCY8"/>
<dbReference type="KEGG" id="hip:CGSHiEE_06470"/>
<dbReference type="HOGENOM" id="CLU_053595_0_1_6"/>
<dbReference type="UniPathway" id="UPA00002">
    <property type="reaction ID" value="UER00468"/>
</dbReference>
<dbReference type="GO" id="GO:0005737">
    <property type="term" value="C:cytoplasm"/>
    <property type="evidence" value="ECO:0007669"/>
    <property type="project" value="UniProtKB-SubCell"/>
</dbReference>
<dbReference type="GO" id="GO:0004139">
    <property type="term" value="F:deoxyribose-phosphate aldolase activity"/>
    <property type="evidence" value="ECO:0007669"/>
    <property type="project" value="UniProtKB-UniRule"/>
</dbReference>
<dbReference type="GO" id="GO:0006018">
    <property type="term" value="P:2-deoxyribose 1-phosphate catabolic process"/>
    <property type="evidence" value="ECO:0007669"/>
    <property type="project" value="UniProtKB-UniRule"/>
</dbReference>
<dbReference type="GO" id="GO:0016052">
    <property type="term" value="P:carbohydrate catabolic process"/>
    <property type="evidence" value="ECO:0007669"/>
    <property type="project" value="TreeGrafter"/>
</dbReference>
<dbReference type="GO" id="GO:0009264">
    <property type="term" value="P:deoxyribonucleotide catabolic process"/>
    <property type="evidence" value="ECO:0007669"/>
    <property type="project" value="InterPro"/>
</dbReference>
<dbReference type="CDD" id="cd00959">
    <property type="entry name" value="DeoC"/>
    <property type="match status" value="1"/>
</dbReference>
<dbReference type="FunFam" id="3.20.20.70:FF:000044">
    <property type="entry name" value="Deoxyribose-phosphate aldolase"/>
    <property type="match status" value="1"/>
</dbReference>
<dbReference type="Gene3D" id="3.20.20.70">
    <property type="entry name" value="Aldolase class I"/>
    <property type="match status" value="1"/>
</dbReference>
<dbReference type="HAMAP" id="MF_00114">
    <property type="entry name" value="DeoC_type1"/>
    <property type="match status" value="1"/>
</dbReference>
<dbReference type="InterPro" id="IPR013785">
    <property type="entry name" value="Aldolase_TIM"/>
</dbReference>
<dbReference type="InterPro" id="IPR011343">
    <property type="entry name" value="DeoC"/>
</dbReference>
<dbReference type="InterPro" id="IPR002915">
    <property type="entry name" value="DeoC/FbaB/LacD_aldolase"/>
</dbReference>
<dbReference type="InterPro" id="IPR028581">
    <property type="entry name" value="DeoC_typeI"/>
</dbReference>
<dbReference type="NCBIfam" id="TIGR00126">
    <property type="entry name" value="deoC"/>
    <property type="match status" value="1"/>
</dbReference>
<dbReference type="PANTHER" id="PTHR10889">
    <property type="entry name" value="DEOXYRIBOSE-PHOSPHATE ALDOLASE"/>
    <property type="match status" value="1"/>
</dbReference>
<dbReference type="PANTHER" id="PTHR10889:SF1">
    <property type="entry name" value="DEOXYRIBOSE-PHOSPHATE ALDOLASE"/>
    <property type="match status" value="1"/>
</dbReference>
<dbReference type="Pfam" id="PF01791">
    <property type="entry name" value="DeoC"/>
    <property type="match status" value="1"/>
</dbReference>
<dbReference type="PIRSF" id="PIRSF001357">
    <property type="entry name" value="DeoC"/>
    <property type="match status" value="1"/>
</dbReference>
<dbReference type="SMART" id="SM01133">
    <property type="entry name" value="DeoC"/>
    <property type="match status" value="1"/>
</dbReference>
<dbReference type="SUPFAM" id="SSF51569">
    <property type="entry name" value="Aldolase"/>
    <property type="match status" value="1"/>
</dbReference>
<comment type="function">
    <text evidence="1">Catalyzes a reversible aldol reaction between acetaldehyde and D-glyceraldehyde 3-phosphate to generate 2-deoxy-D-ribose 5-phosphate.</text>
</comment>
<comment type="catalytic activity">
    <reaction evidence="1">
        <text>2-deoxy-D-ribose 5-phosphate = D-glyceraldehyde 3-phosphate + acetaldehyde</text>
        <dbReference type="Rhea" id="RHEA:12821"/>
        <dbReference type="ChEBI" id="CHEBI:15343"/>
        <dbReference type="ChEBI" id="CHEBI:59776"/>
        <dbReference type="ChEBI" id="CHEBI:62877"/>
        <dbReference type="EC" id="4.1.2.4"/>
    </reaction>
</comment>
<comment type="pathway">
    <text evidence="1">Carbohydrate degradation; 2-deoxy-D-ribose 1-phosphate degradation; D-glyceraldehyde 3-phosphate and acetaldehyde from 2-deoxy-alpha-D-ribose 1-phosphate: step 2/2.</text>
</comment>
<comment type="subcellular location">
    <subcellularLocation>
        <location evidence="1">Cytoplasm</location>
    </subcellularLocation>
</comment>
<comment type="similarity">
    <text evidence="1">Belongs to the DeoC/FbaB aldolase family. DeoC type 1 subfamily.</text>
</comment>
<name>DEOC_HAEIE</name>
<evidence type="ECO:0000255" key="1">
    <source>
        <dbReference type="HAMAP-Rule" id="MF_00114"/>
    </source>
</evidence>
<organism>
    <name type="scientific">Haemophilus influenzae (strain PittEE)</name>
    <dbReference type="NCBI Taxonomy" id="374930"/>
    <lineage>
        <taxon>Bacteria</taxon>
        <taxon>Pseudomonadati</taxon>
        <taxon>Pseudomonadota</taxon>
        <taxon>Gammaproteobacteria</taxon>
        <taxon>Pasteurellales</taxon>
        <taxon>Pasteurellaceae</taxon>
        <taxon>Haemophilus</taxon>
    </lineage>
</organism>
<feature type="chain" id="PRO_1000015317" description="Deoxyribose-phosphate aldolase">
    <location>
        <begin position="1"/>
        <end position="223"/>
    </location>
</feature>
<feature type="active site" description="Proton donor/acceptor" evidence="1">
    <location>
        <position position="92"/>
    </location>
</feature>
<feature type="active site" description="Schiff-base intermediate with acetaldehyde" evidence="1">
    <location>
        <position position="154"/>
    </location>
</feature>
<feature type="active site" description="Proton donor/acceptor" evidence="1">
    <location>
        <position position="182"/>
    </location>
</feature>
<proteinExistence type="inferred from homology"/>
<accession>A5UCY8</accession>
<gene>
    <name evidence="1" type="primary">deoC</name>
    <name type="ordered locus">CGSHiEE_06470</name>
</gene>
<sequence>MTSNQLAQYIDHTALTAEKNEQDISTLCNEAIEHGFYSVCINSGYIPLAKEKLAGSNVKICTVVGFPLGANLTSVKAFETQEAIKAGANEIDMVINVGWIKSQKWDEVKQDIQAVFNACNGTPLKVILETCLLTKDEIVKACEICKEIGVAFVKTSTGFNKGGATVEDVALMKQTVGNIGVKASGGVRDTETALAMIKAGATRIGASAGIAIISGTQDTQSTY</sequence>